<sequence length="294" mass="32692">MSEQRRATTHLIGGFSGGLVSAIILQPFDLLKTRLQQDKTSTLWKTLKSIETPSQLWRGALPSCIRTSVGSAMYLTMLNSIRQAISKGKNTGSTGSSYLPQLNMYENMFSGAVTRALTGLITMPITVIKVRYESTLYQYTSLRYATSHIFRTEGLRGFFRGFGATALRDAPYAGLYMLFYDRMKVLVPTLLPSNVVKLNSDNRYSTYASTLINGSSAFSAAVIATSITAPFDTVKTRMQLEPAKFHSFTSTFWHIATKESVRNLFAGISLRLTRKAFSAGIAWGIYEEIVKKFV</sequence>
<dbReference type="EMBL" id="CR382125">
    <property type="protein sequence ID" value="CAG99438.1"/>
    <property type="molecule type" value="Genomic_DNA"/>
</dbReference>
<dbReference type="RefSeq" id="XP_454351.1">
    <property type="nucleotide sequence ID" value="XM_454351.1"/>
</dbReference>
<dbReference type="SMR" id="Q6CNY8"/>
<dbReference type="FunCoup" id="Q6CNY8">
    <property type="interactions" value="113"/>
</dbReference>
<dbReference type="STRING" id="284590.Q6CNY8"/>
<dbReference type="PaxDb" id="284590-Q6CNY8"/>
<dbReference type="KEGG" id="kla:KLLA0_E08911g"/>
<dbReference type="eggNOG" id="KOG0766">
    <property type="taxonomic scope" value="Eukaryota"/>
</dbReference>
<dbReference type="HOGENOM" id="CLU_015166_0_3_1"/>
<dbReference type="InParanoid" id="Q6CNY8"/>
<dbReference type="OMA" id="WGIYEEL"/>
<dbReference type="Proteomes" id="UP000000598">
    <property type="component" value="Chromosome E"/>
</dbReference>
<dbReference type="GO" id="GO:0005743">
    <property type="term" value="C:mitochondrial inner membrane"/>
    <property type="evidence" value="ECO:0007669"/>
    <property type="project" value="UniProtKB-SubCell"/>
</dbReference>
<dbReference type="GO" id="GO:0015187">
    <property type="term" value="F:glycine transmembrane transporter activity"/>
    <property type="evidence" value="ECO:0007669"/>
    <property type="project" value="UniProtKB-UniRule"/>
</dbReference>
<dbReference type="GO" id="GO:1904983">
    <property type="term" value="P:glycine import into mitochondrion"/>
    <property type="evidence" value="ECO:0007669"/>
    <property type="project" value="UniProtKB-UniRule"/>
</dbReference>
<dbReference type="FunFam" id="1.50.40.10:FF:000103">
    <property type="entry name" value="Mitochondrial glycine transporter"/>
    <property type="match status" value="1"/>
</dbReference>
<dbReference type="Gene3D" id="1.50.40.10">
    <property type="entry name" value="Mitochondrial carrier domain"/>
    <property type="match status" value="1"/>
</dbReference>
<dbReference type="HAMAP" id="MF_03064">
    <property type="entry name" value="SLC25A38"/>
    <property type="match status" value="1"/>
</dbReference>
<dbReference type="InterPro" id="IPR030847">
    <property type="entry name" value="Hem25/SLC25A38"/>
</dbReference>
<dbReference type="InterPro" id="IPR002067">
    <property type="entry name" value="Mit_carrier"/>
</dbReference>
<dbReference type="InterPro" id="IPR018108">
    <property type="entry name" value="Mitochondrial_sb/sol_carrier"/>
</dbReference>
<dbReference type="InterPro" id="IPR023395">
    <property type="entry name" value="Mt_carrier_dom_sf"/>
</dbReference>
<dbReference type="PANTHER" id="PTHR46181">
    <property type="entry name" value="MITOCHONDRIAL GLYCINE TRANSPORTER"/>
    <property type="match status" value="1"/>
</dbReference>
<dbReference type="PANTHER" id="PTHR46181:SF3">
    <property type="entry name" value="MITOCHONDRIAL GLYCINE TRANSPORTER"/>
    <property type="match status" value="1"/>
</dbReference>
<dbReference type="Pfam" id="PF00153">
    <property type="entry name" value="Mito_carr"/>
    <property type="match status" value="3"/>
</dbReference>
<dbReference type="PRINTS" id="PR00926">
    <property type="entry name" value="MITOCARRIER"/>
</dbReference>
<dbReference type="SUPFAM" id="SSF103506">
    <property type="entry name" value="Mitochondrial carrier"/>
    <property type="match status" value="1"/>
</dbReference>
<dbReference type="PROSITE" id="PS50920">
    <property type="entry name" value="SOLCAR"/>
    <property type="match status" value="3"/>
</dbReference>
<gene>
    <name type="ordered locus">KLLA0E08911g</name>
</gene>
<protein>
    <recommendedName>
        <fullName evidence="2">Mitochondrial glycine transporter</fullName>
    </recommendedName>
    <alternativeName>
        <fullName evidence="2">Solute carrier family 25 member 38 homolog</fullName>
    </alternativeName>
</protein>
<evidence type="ECO:0000250" key="1">
    <source>
        <dbReference type="UniProtKB" id="Q96DW6"/>
    </source>
</evidence>
<evidence type="ECO:0000255" key="2">
    <source>
        <dbReference type="HAMAP-Rule" id="MF_03064"/>
    </source>
</evidence>
<organism>
    <name type="scientific">Kluyveromyces lactis (strain ATCC 8585 / CBS 2359 / DSM 70799 / NBRC 1267 / NRRL Y-1140 / WM37)</name>
    <name type="common">Yeast</name>
    <name type="synonym">Candida sphaerica</name>
    <dbReference type="NCBI Taxonomy" id="284590"/>
    <lineage>
        <taxon>Eukaryota</taxon>
        <taxon>Fungi</taxon>
        <taxon>Dikarya</taxon>
        <taxon>Ascomycota</taxon>
        <taxon>Saccharomycotina</taxon>
        <taxon>Saccharomycetes</taxon>
        <taxon>Saccharomycetales</taxon>
        <taxon>Saccharomycetaceae</taxon>
        <taxon>Kluyveromyces</taxon>
    </lineage>
</organism>
<comment type="function">
    <text evidence="2">Mitochondrial glycine transporter that imports glycine into the mitochondrial matrix. Plays an important role in providing glycine for the first enzymatic step in heme biosynthesis, the condensation of glycine with succinyl-CoA to produce 5-aminolevulinate (ALA) in the mitochondrial matrix.</text>
</comment>
<comment type="catalytic activity">
    <reaction evidence="1">
        <text>glycine(in) = glycine(out)</text>
        <dbReference type="Rhea" id="RHEA:70715"/>
        <dbReference type="ChEBI" id="CHEBI:57305"/>
    </reaction>
</comment>
<comment type="subcellular location">
    <subcellularLocation>
        <location evidence="2">Mitochondrion inner membrane</location>
        <topology evidence="2">Multi-pass membrane protein</topology>
    </subcellularLocation>
</comment>
<comment type="similarity">
    <text evidence="2">Belongs to the mitochondrial carrier (TC 2.A.29) family. SLC25A38 subfamily.</text>
</comment>
<accession>Q6CNY8</accession>
<proteinExistence type="inferred from homology"/>
<name>S2538_KLULA</name>
<keyword id="KW-0472">Membrane</keyword>
<keyword id="KW-0496">Mitochondrion</keyword>
<keyword id="KW-0999">Mitochondrion inner membrane</keyword>
<keyword id="KW-1185">Reference proteome</keyword>
<keyword id="KW-0677">Repeat</keyword>
<keyword id="KW-0812">Transmembrane</keyword>
<keyword id="KW-1133">Transmembrane helix</keyword>
<keyword id="KW-0813">Transport</keyword>
<feature type="chain" id="PRO_0000378936" description="Mitochondrial glycine transporter">
    <location>
        <begin position="1"/>
        <end position="294"/>
    </location>
</feature>
<feature type="transmembrane region" description="Helical; Name=1" evidence="2">
    <location>
        <begin position="11"/>
        <end position="36"/>
    </location>
</feature>
<feature type="transmembrane region" description="Helical; Name=2" evidence="2">
    <location>
        <begin position="59"/>
        <end position="85"/>
    </location>
</feature>
<feature type="transmembrane region" description="Helical; Name=3" evidence="2">
    <location>
        <begin position="108"/>
        <end position="133"/>
    </location>
</feature>
<feature type="transmembrane region" description="Helical; Name=4" evidence="2">
    <location>
        <begin position="161"/>
        <end position="184"/>
    </location>
</feature>
<feature type="transmembrane region" description="Helical; Name=5" evidence="2">
    <location>
        <begin position="212"/>
        <end position="238"/>
    </location>
</feature>
<feature type="transmembrane region" description="Helical; Name=6" evidence="2">
    <location>
        <begin position="267"/>
        <end position="285"/>
    </location>
</feature>
<feature type="repeat" description="Solcar 1" evidence="2">
    <location>
        <begin position="5"/>
        <end position="84"/>
    </location>
</feature>
<feature type="repeat" description="Solcar 2" evidence="2">
    <location>
        <begin position="102"/>
        <end position="186"/>
    </location>
</feature>
<feature type="repeat" description="Solcar 3" evidence="2">
    <location>
        <begin position="208"/>
        <end position="292"/>
    </location>
</feature>
<reference key="1">
    <citation type="journal article" date="2004" name="Nature">
        <title>Genome evolution in yeasts.</title>
        <authorList>
            <person name="Dujon B."/>
            <person name="Sherman D."/>
            <person name="Fischer G."/>
            <person name="Durrens P."/>
            <person name="Casaregola S."/>
            <person name="Lafontaine I."/>
            <person name="de Montigny J."/>
            <person name="Marck C."/>
            <person name="Neuveglise C."/>
            <person name="Talla E."/>
            <person name="Goffard N."/>
            <person name="Frangeul L."/>
            <person name="Aigle M."/>
            <person name="Anthouard V."/>
            <person name="Babour A."/>
            <person name="Barbe V."/>
            <person name="Barnay S."/>
            <person name="Blanchin S."/>
            <person name="Beckerich J.-M."/>
            <person name="Beyne E."/>
            <person name="Bleykasten C."/>
            <person name="Boisrame A."/>
            <person name="Boyer J."/>
            <person name="Cattolico L."/>
            <person name="Confanioleri F."/>
            <person name="de Daruvar A."/>
            <person name="Despons L."/>
            <person name="Fabre E."/>
            <person name="Fairhead C."/>
            <person name="Ferry-Dumazet H."/>
            <person name="Groppi A."/>
            <person name="Hantraye F."/>
            <person name="Hennequin C."/>
            <person name="Jauniaux N."/>
            <person name="Joyet P."/>
            <person name="Kachouri R."/>
            <person name="Kerrest A."/>
            <person name="Koszul R."/>
            <person name="Lemaire M."/>
            <person name="Lesur I."/>
            <person name="Ma L."/>
            <person name="Muller H."/>
            <person name="Nicaud J.-M."/>
            <person name="Nikolski M."/>
            <person name="Oztas S."/>
            <person name="Ozier-Kalogeropoulos O."/>
            <person name="Pellenz S."/>
            <person name="Potier S."/>
            <person name="Richard G.-F."/>
            <person name="Straub M.-L."/>
            <person name="Suleau A."/>
            <person name="Swennen D."/>
            <person name="Tekaia F."/>
            <person name="Wesolowski-Louvel M."/>
            <person name="Westhof E."/>
            <person name="Wirth B."/>
            <person name="Zeniou-Meyer M."/>
            <person name="Zivanovic Y."/>
            <person name="Bolotin-Fukuhara M."/>
            <person name="Thierry A."/>
            <person name="Bouchier C."/>
            <person name="Caudron B."/>
            <person name="Scarpelli C."/>
            <person name="Gaillardin C."/>
            <person name="Weissenbach J."/>
            <person name="Wincker P."/>
            <person name="Souciet J.-L."/>
        </authorList>
    </citation>
    <scope>NUCLEOTIDE SEQUENCE [LARGE SCALE GENOMIC DNA]</scope>
    <source>
        <strain>ATCC 8585 / CBS 2359 / DSM 70799 / NBRC 1267 / NRRL Y-1140 / WM37</strain>
    </source>
</reference>